<organism>
    <name type="scientific">Acanthamoeba polyphaga mimivirus</name>
    <name type="common">APMV</name>
    <dbReference type="NCBI Taxonomy" id="212035"/>
    <lineage>
        <taxon>Viruses</taxon>
        <taxon>Varidnaviria</taxon>
        <taxon>Bamfordvirae</taxon>
        <taxon>Nucleocytoviricota</taxon>
        <taxon>Megaviricetes</taxon>
        <taxon>Imitervirales</taxon>
        <taxon>Mimiviridae</taxon>
        <taxon>Megamimivirinae</taxon>
        <taxon>Mimivirus</taxon>
        <taxon>Mimivirus bradfordmassiliense</taxon>
    </lineage>
</organism>
<keyword id="KW-1185">Reference proteome</keyword>
<feature type="chain" id="PRO_0000071235" description="Uncharacterized protein L179">
    <location>
        <begin position="1"/>
        <end position="367"/>
    </location>
</feature>
<accession>Q5UPN6</accession>
<reference key="1">
    <citation type="journal article" date="2004" name="Science">
        <title>The 1.2-megabase genome sequence of Mimivirus.</title>
        <authorList>
            <person name="Raoult D."/>
            <person name="Audic S."/>
            <person name="Robert C."/>
            <person name="Abergel C."/>
            <person name="Renesto P."/>
            <person name="Ogata H."/>
            <person name="La Scola B."/>
            <person name="Susan M."/>
            <person name="Claverie J.-M."/>
        </authorList>
    </citation>
    <scope>NUCLEOTIDE SEQUENCE [LARGE SCALE GENOMIC DNA]</scope>
    <source>
        <strain>Rowbotham-Bradford</strain>
    </source>
</reference>
<evidence type="ECO:0000305" key="1"/>
<gene>
    <name type="ordered locus">MIMI_L179</name>
</gene>
<protein>
    <recommendedName>
        <fullName>Uncharacterized protein L179</fullName>
    </recommendedName>
</protein>
<dbReference type="EMBL" id="AY653733">
    <property type="protein sequence ID" value="AAV50453.1"/>
    <property type="molecule type" value="Genomic_DNA"/>
</dbReference>
<dbReference type="KEGG" id="vg:9924781"/>
<dbReference type="Proteomes" id="UP000001134">
    <property type="component" value="Genome"/>
</dbReference>
<comment type="similarity">
    <text evidence="1">Belongs to the mimivirus L17x/L18x family.</text>
</comment>
<organismHost>
    <name type="scientific">Acanthamoeba polyphaga</name>
    <name type="common">Amoeba</name>
    <dbReference type="NCBI Taxonomy" id="5757"/>
</organismHost>
<sequence length="367" mass="43599">MGDFVFYYGLHNKISKYIKQTKKGCKLYLDDENYINVEMGTLFGQKYITVNFNDSLDFMKFIVKKKIYCDEYKHDYLKYILQNKHYDIIKFYCKKFIPLVKPNDSVFSFFNSLFVDIDLDDFKYIFKYSCLEDIKPHINYILYKADNINIEFMDDIISMYKSKLTKLFTSGKIFYLEISEIEINPCIFLVPALRKDDTNLFDFIMEEICNLTSEIDKTKLNKKRLKLLENFEVEFNSEFIWEIINYYILDDFGRGENRYGTYICPNIFRQLLSSIFDMDSLIDEGGVDDILMYDAVEYMGILCDFIGDTRPEFINKILVEARSTKMAQLLIDYGADYEALYESNEFRKCDSCVNKLVKKIIRETSDS</sequence>
<name>YL179_MIMIV</name>
<proteinExistence type="inferred from homology"/>